<organism>
    <name type="scientific">Burkholderia cenocepacia (strain HI2424)</name>
    <dbReference type="NCBI Taxonomy" id="331272"/>
    <lineage>
        <taxon>Bacteria</taxon>
        <taxon>Pseudomonadati</taxon>
        <taxon>Pseudomonadota</taxon>
        <taxon>Betaproteobacteria</taxon>
        <taxon>Burkholderiales</taxon>
        <taxon>Burkholderiaceae</taxon>
        <taxon>Burkholderia</taxon>
        <taxon>Burkholderia cepacia complex</taxon>
    </lineage>
</organism>
<comment type="subunit">
    <text evidence="1">Part of the 50S ribosomal subunit.</text>
</comment>
<comment type="similarity">
    <text evidence="1">Belongs to the universal ribosomal protein uL30 family.</text>
</comment>
<accession>A0K3P3</accession>
<protein>
    <recommendedName>
        <fullName evidence="1">Large ribosomal subunit protein uL30</fullName>
    </recommendedName>
    <alternativeName>
        <fullName evidence="2">50S ribosomal protein L30</fullName>
    </alternativeName>
</protein>
<dbReference type="EMBL" id="CP000458">
    <property type="protein sequence ID" value="ABK07120.1"/>
    <property type="molecule type" value="Genomic_DNA"/>
</dbReference>
<dbReference type="RefSeq" id="WP_006400644.1">
    <property type="nucleotide sequence ID" value="NC_008542.1"/>
</dbReference>
<dbReference type="SMR" id="A0K3P3"/>
<dbReference type="GeneID" id="98107142"/>
<dbReference type="KEGG" id="bch:Bcen2424_0366"/>
<dbReference type="HOGENOM" id="CLU_131047_1_4_4"/>
<dbReference type="GO" id="GO:0022625">
    <property type="term" value="C:cytosolic large ribosomal subunit"/>
    <property type="evidence" value="ECO:0007669"/>
    <property type="project" value="TreeGrafter"/>
</dbReference>
<dbReference type="GO" id="GO:0003735">
    <property type="term" value="F:structural constituent of ribosome"/>
    <property type="evidence" value="ECO:0007669"/>
    <property type="project" value="InterPro"/>
</dbReference>
<dbReference type="GO" id="GO:0006412">
    <property type="term" value="P:translation"/>
    <property type="evidence" value="ECO:0007669"/>
    <property type="project" value="UniProtKB-UniRule"/>
</dbReference>
<dbReference type="CDD" id="cd01658">
    <property type="entry name" value="Ribosomal_L30"/>
    <property type="match status" value="1"/>
</dbReference>
<dbReference type="FunFam" id="3.30.1390.20:FF:000001">
    <property type="entry name" value="50S ribosomal protein L30"/>
    <property type="match status" value="1"/>
</dbReference>
<dbReference type="Gene3D" id="3.30.1390.20">
    <property type="entry name" value="Ribosomal protein L30, ferredoxin-like fold domain"/>
    <property type="match status" value="1"/>
</dbReference>
<dbReference type="HAMAP" id="MF_01371_B">
    <property type="entry name" value="Ribosomal_uL30_B"/>
    <property type="match status" value="1"/>
</dbReference>
<dbReference type="InterPro" id="IPR036919">
    <property type="entry name" value="Ribo_uL30_ferredoxin-like_sf"/>
</dbReference>
<dbReference type="InterPro" id="IPR005996">
    <property type="entry name" value="Ribosomal_uL30_bac-type"/>
</dbReference>
<dbReference type="InterPro" id="IPR016082">
    <property type="entry name" value="Ribosomal_uL30_ferredoxin-like"/>
</dbReference>
<dbReference type="NCBIfam" id="TIGR01308">
    <property type="entry name" value="rpmD_bact"/>
    <property type="match status" value="1"/>
</dbReference>
<dbReference type="PANTHER" id="PTHR15892:SF2">
    <property type="entry name" value="LARGE RIBOSOMAL SUBUNIT PROTEIN UL30M"/>
    <property type="match status" value="1"/>
</dbReference>
<dbReference type="PANTHER" id="PTHR15892">
    <property type="entry name" value="MITOCHONDRIAL RIBOSOMAL PROTEIN L30"/>
    <property type="match status" value="1"/>
</dbReference>
<dbReference type="Pfam" id="PF00327">
    <property type="entry name" value="Ribosomal_L30"/>
    <property type="match status" value="1"/>
</dbReference>
<dbReference type="PIRSF" id="PIRSF002211">
    <property type="entry name" value="Ribosomal_L30_bac-type"/>
    <property type="match status" value="1"/>
</dbReference>
<dbReference type="SUPFAM" id="SSF55129">
    <property type="entry name" value="Ribosomal protein L30p/L7e"/>
    <property type="match status" value="1"/>
</dbReference>
<feature type="chain" id="PRO_1000056017" description="Large ribosomal subunit protein uL30">
    <location>
        <begin position="1"/>
        <end position="60"/>
    </location>
</feature>
<evidence type="ECO:0000255" key="1">
    <source>
        <dbReference type="HAMAP-Rule" id="MF_01371"/>
    </source>
</evidence>
<evidence type="ECO:0000305" key="2"/>
<keyword id="KW-0687">Ribonucleoprotein</keyword>
<keyword id="KW-0689">Ribosomal protein</keyword>
<proteinExistence type="inferred from homology"/>
<name>RL30_BURCH</name>
<sequence length="60" mass="6635">MSEKTVKVQLVKSLIGTRESHRATVRGLGLRRLNSVSELQDTPAVRGMINKVSYLVKVIA</sequence>
<gene>
    <name evidence="1" type="primary">rpmD</name>
    <name type="ordered locus">Bcen2424_0366</name>
</gene>
<reference key="1">
    <citation type="submission" date="2006-08" db="EMBL/GenBank/DDBJ databases">
        <title>Complete sequence of chromosome 1 of Burkholderia cenocepacia HI2424.</title>
        <authorList>
            <person name="Copeland A."/>
            <person name="Lucas S."/>
            <person name="Lapidus A."/>
            <person name="Barry K."/>
            <person name="Detter J.C."/>
            <person name="Glavina del Rio T."/>
            <person name="Hammon N."/>
            <person name="Israni S."/>
            <person name="Pitluck S."/>
            <person name="Chain P."/>
            <person name="Malfatti S."/>
            <person name="Shin M."/>
            <person name="Vergez L."/>
            <person name="Schmutz J."/>
            <person name="Larimer F."/>
            <person name="Land M."/>
            <person name="Hauser L."/>
            <person name="Kyrpides N."/>
            <person name="Kim E."/>
            <person name="LiPuma J.J."/>
            <person name="Gonzalez C.F."/>
            <person name="Konstantinidis K."/>
            <person name="Tiedje J.M."/>
            <person name="Richardson P."/>
        </authorList>
    </citation>
    <scope>NUCLEOTIDE SEQUENCE [LARGE SCALE GENOMIC DNA]</scope>
    <source>
        <strain>HI2424</strain>
    </source>
</reference>